<name>SERC_BORPE</name>
<comment type="function">
    <text evidence="1">Catalyzes the reversible conversion of 3-phosphohydroxypyruvate to phosphoserine and of 3-hydroxy-2-oxo-4-phosphonooxybutanoate to phosphohydroxythreonine.</text>
</comment>
<comment type="catalytic activity">
    <reaction evidence="1">
        <text>O-phospho-L-serine + 2-oxoglutarate = 3-phosphooxypyruvate + L-glutamate</text>
        <dbReference type="Rhea" id="RHEA:14329"/>
        <dbReference type="ChEBI" id="CHEBI:16810"/>
        <dbReference type="ChEBI" id="CHEBI:18110"/>
        <dbReference type="ChEBI" id="CHEBI:29985"/>
        <dbReference type="ChEBI" id="CHEBI:57524"/>
        <dbReference type="EC" id="2.6.1.52"/>
    </reaction>
</comment>
<comment type="catalytic activity">
    <reaction evidence="1">
        <text>4-(phosphooxy)-L-threonine + 2-oxoglutarate = (R)-3-hydroxy-2-oxo-4-phosphooxybutanoate + L-glutamate</text>
        <dbReference type="Rhea" id="RHEA:16573"/>
        <dbReference type="ChEBI" id="CHEBI:16810"/>
        <dbReference type="ChEBI" id="CHEBI:29985"/>
        <dbReference type="ChEBI" id="CHEBI:58452"/>
        <dbReference type="ChEBI" id="CHEBI:58538"/>
        <dbReference type="EC" id="2.6.1.52"/>
    </reaction>
</comment>
<comment type="cofactor">
    <cofactor evidence="1">
        <name>pyridoxal 5'-phosphate</name>
        <dbReference type="ChEBI" id="CHEBI:597326"/>
    </cofactor>
    <text evidence="1">Binds 1 pyridoxal phosphate per subunit.</text>
</comment>
<comment type="pathway">
    <text evidence="1">Amino-acid biosynthesis; L-serine biosynthesis; L-serine from 3-phospho-D-glycerate: step 2/3.</text>
</comment>
<comment type="pathway">
    <text evidence="1">Cofactor biosynthesis; pyridoxine 5'-phosphate biosynthesis; pyridoxine 5'-phosphate from D-erythrose 4-phosphate: step 3/5.</text>
</comment>
<comment type="subunit">
    <text evidence="1">Homodimer.</text>
</comment>
<comment type="subcellular location">
    <subcellularLocation>
        <location evidence="1">Cytoplasm</location>
    </subcellularLocation>
</comment>
<comment type="similarity">
    <text evidence="1">Belongs to the class-V pyridoxal-phosphate-dependent aminotransferase family. SerC subfamily.</text>
</comment>
<keyword id="KW-0028">Amino-acid biosynthesis</keyword>
<keyword id="KW-0032">Aminotransferase</keyword>
<keyword id="KW-0963">Cytoplasm</keyword>
<keyword id="KW-0663">Pyridoxal phosphate</keyword>
<keyword id="KW-0664">Pyridoxine biosynthesis</keyword>
<keyword id="KW-1185">Reference proteome</keyword>
<keyword id="KW-0718">Serine biosynthesis</keyword>
<keyword id="KW-0808">Transferase</keyword>
<feature type="chain" id="PRO_0000150157" description="Phosphoserine aminotransferase">
    <location>
        <begin position="1"/>
        <end position="377"/>
    </location>
</feature>
<feature type="binding site" evidence="1">
    <location>
        <position position="43"/>
    </location>
    <ligand>
        <name>L-glutamate</name>
        <dbReference type="ChEBI" id="CHEBI:29985"/>
    </ligand>
</feature>
<feature type="binding site" evidence="1">
    <location>
        <position position="105"/>
    </location>
    <ligand>
        <name>pyridoxal 5'-phosphate</name>
        <dbReference type="ChEBI" id="CHEBI:597326"/>
    </ligand>
</feature>
<feature type="binding site" evidence="1">
    <location>
        <position position="164"/>
    </location>
    <ligand>
        <name>pyridoxal 5'-phosphate</name>
        <dbReference type="ChEBI" id="CHEBI:597326"/>
    </ligand>
</feature>
<feature type="binding site" evidence="1">
    <location>
        <position position="189"/>
    </location>
    <ligand>
        <name>pyridoxal 5'-phosphate</name>
        <dbReference type="ChEBI" id="CHEBI:597326"/>
    </ligand>
</feature>
<feature type="binding site" evidence="1">
    <location>
        <position position="212"/>
    </location>
    <ligand>
        <name>pyridoxal 5'-phosphate</name>
        <dbReference type="ChEBI" id="CHEBI:597326"/>
    </ligand>
</feature>
<feature type="binding site" evidence="1">
    <location>
        <begin position="254"/>
        <end position="255"/>
    </location>
    <ligand>
        <name>pyridoxal 5'-phosphate</name>
        <dbReference type="ChEBI" id="CHEBI:597326"/>
    </ligand>
</feature>
<feature type="modified residue" description="N6-(pyridoxal phosphate)lysine" evidence="1">
    <location>
        <position position="213"/>
    </location>
</feature>
<gene>
    <name evidence="1" type="primary">serC</name>
    <name type="ordered locus">BP0945</name>
</gene>
<protein>
    <recommendedName>
        <fullName evidence="1">Phosphoserine aminotransferase</fullName>
        <ecNumber evidence="1">2.6.1.52</ecNumber>
    </recommendedName>
    <alternativeName>
        <fullName evidence="1">Phosphohydroxythreonine aminotransferase</fullName>
        <shortName evidence="1">PSAT</shortName>
    </alternativeName>
</protein>
<dbReference type="EC" id="2.6.1.52" evidence="1"/>
<dbReference type="EMBL" id="BX640413">
    <property type="protein sequence ID" value="CAE41247.1"/>
    <property type="molecule type" value="Genomic_DNA"/>
</dbReference>
<dbReference type="RefSeq" id="NP_879746.1">
    <property type="nucleotide sequence ID" value="NC_002929.2"/>
</dbReference>
<dbReference type="RefSeq" id="WP_010930096.1">
    <property type="nucleotide sequence ID" value="NZ_CP039022.1"/>
</dbReference>
<dbReference type="SMR" id="Q7VZG4"/>
<dbReference type="STRING" id="257313.BP0945"/>
<dbReference type="PaxDb" id="257313-BP0945"/>
<dbReference type="GeneID" id="69600871"/>
<dbReference type="KEGG" id="bpe:BP0945"/>
<dbReference type="PATRIC" id="fig|257313.5.peg.1009"/>
<dbReference type="eggNOG" id="COG1932">
    <property type="taxonomic scope" value="Bacteria"/>
</dbReference>
<dbReference type="HOGENOM" id="CLU_034866_0_2_4"/>
<dbReference type="UniPathway" id="UPA00135">
    <property type="reaction ID" value="UER00197"/>
</dbReference>
<dbReference type="UniPathway" id="UPA00244">
    <property type="reaction ID" value="UER00311"/>
</dbReference>
<dbReference type="Proteomes" id="UP000002676">
    <property type="component" value="Chromosome"/>
</dbReference>
<dbReference type="GO" id="GO:0005737">
    <property type="term" value="C:cytoplasm"/>
    <property type="evidence" value="ECO:0007669"/>
    <property type="project" value="UniProtKB-SubCell"/>
</dbReference>
<dbReference type="GO" id="GO:0004648">
    <property type="term" value="F:O-phospho-L-serine:2-oxoglutarate aminotransferase activity"/>
    <property type="evidence" value="ECO:0007669"/>
    <property type="project" value="UniProtKB-UniRule"/>
</dbReference>
<dbReference type="GO" id="GO:0030170">
    <property type="term" value="F:pyridoxal phosphate binding"/>
    <property type="evidence" value="ECO:0007669"/>
    <property type="project" value="UniProtKB-UniRule"/>
</dbReference>
<dbReference type="GO" id="GO:0006564">
    <property type="term" value="P:L-serine biosynthetic process"/>
    <property type="evidence" value="ECO:0007669"/>
    <property type="project" value="UniProtKB-UniRule"/>
</dbReference>
<dbReference type="GO" id="GO:0008615">
    <property type="term" value="P:pyridoxine biosynthetic process"/>
    <property type="evidence" value="ECO:0007669"/>
    <property type="project" value="UniProtKB-UniRule"/>
</dbReference>
<dbReference type="FunFam" id="3.40.640.10:FF:000010">
    <property type="entry name" value="Phosphoserine aminotransferase"/>
    <property type="match status" value="1"/>
</dbReference>
<dbReference type="FunFam" id="3.90.1150.10:FF:000006">
    <property type="entry name" value="Phosphoserine aminotransferase"/>
    <property type="match status" value="1"/>
</dbReference>
<dbReference type="Gene3D" id="3.90.1150.10">
    <property type="entry name" value="Aspartate Aminotransferase, domain 1"/>
    <property type="match status" value="1"/>
</dbReference>
<dbReference type="Gene3D" id="3.40.640.10">
    <property type="entry name" value="Type I PLP-dependent aspartate aminotransferase-like (Major domain)"/>
    <property type="match status" value="1"/>
</dbReference>
<dbReference type="HAMAP" id="MF_00160">
    <property type="entry name" value="SerC_aminotrans_5"/>
    <property type="match status" value="1"/>
</dbReference>
<dbReference type="InterPro" id="IPR000192">
    <property type="entry name" value="Aminotrans_V_dom"/>
</dbReference>
<dbReference type="InterPro" id="IPR022278">
    <property type="entry name" value="Pser_aminoTfrase"/>
</dbReference>
<dbReference type="InterPro" id="IPR015424">
    <property type="entry name" value="PyrdxlP-dep_Trfase"/>
</dbReference>
<dbReference type="InterPro" id="IPR015421">
    <property type="entry name" value="PyrdxlP-dep_Trfase_major"/>
</dbReference>
<dbReference type="InterPro" id="IPR015422">
    <property type="entry name" value="PyrdxlP-dep_Trfase_small"/>
</dbReference>
<dbReference type="NCBIfam" id="NF003764">
    <property type="entry name" value="PRK05355.1"/>
    <property type="match status" value="1"/>
</dbReference>
<dbReference type="NCBIfam" id="TIGR01364">
    <property type="entry name" value="serC_1"/>
    <property type="match status" value="1"/>
</dbReference>
<dbReference type="PANTHER" id="PTHR43247">
    <property type="entry name" value="PHOSPHOSERINE AMINOTRANSFERASE"/>
    <property type="match status" value="1"/>
</dbReference>
<dbReference type="PANTHER" id="PTHR43247:SF1">
    <property type="entry name" value="PHOSPHOSERINE AMINOTRANSFERASE"/>
    <property type="match status" value="1"/>
</dbReference>
<dbReference type="Pfam" id="PF00266">
    <property type="entry name" value="Aminotran_5"/>
    <property type="match status" value="1"/>
</dbReference>
<dbReference type="PIRSF" id="PIRSF000525">
    <property type="entry name" value="SerC"/>
    <property type="match status" value="1"/>
</dbReference>
<dbReference type="SUPFAM" id="SSF53383">
    <property type="entry name" value="PLP-dependent transferases"/>
    <property type="match status" value="1"/>
</dbReference>
<sequence length="377" mass="40858">MMARPWNFSAGPSALPEAVLQQAAAEMLDWHGSGMSVMEMSHRGKHFVQICDEAEADLRELLGLPADYAVMFMQGGGLGENAIVPMNLMGRRSTPAADFVVTGHWSTRSHKEAGRYGDAQIAASAAEATEIDGQAQSSWTWLPPVDTWRVRKDSAYLHLCSNETIGGVEFTEWPDPASLGAPDVPLVVDVSSHFLSRPLDIARAGLVFAGAQKNAGPAGVTVVIARRDLLGHALPICPSAFDYANVAADHSRYNTPPTFAIYVMGLVFKWIKAHGGVRGMEEANRAKAELLYGYLDGSAFYRNPVQASVRSRMNVPFVLRDESLNDAFLQGAEAAGLMQLKGHKSVGGMRASIYNAMPLAGVQALIDYLKEFERRHG</sequence>
<reference key="1">
    <citation type="journal article" date="2003" name="Nat. Genet.">
        <title>Comparative analysis of the genome sequences of Bordetella pertussis, Bordetella parapertussis and Bordetella bronchiseptica.</title>
        <authorList>
            <person name="Parkhill J."/>
            <person name="Sebaihia M."/>
            <person name="Preston A."/>
            <person name="Murphy L.D."/>
            <person name="Thomson N.R."/>
            <person name="Harris D.E."/>
            <person name="Holden M.T.G."/>
            <person name="Churcher C.M."/>
            <person name="Bentley S.D."/>
            <person name="Mungall K.L."/>
            <person name="Cerdeno-Tarraga A.-M."/>
            <person name="Temple L."/>
            <person name="James K.D."/>
            <person name="Harris B."/>
            <person name="Quail M.A."/>
            <person name="Achtman M."/>
            <person name="Atkin R."/>
            <person name="Baker S."/>
            <person name="Basham D."/>
            <person name="Bason N."/>
            <person name="Cherevach I."/>
            <person name="Chillingworth T."/>
            <person name="Collins M."/>
            <person name="Cronin A."/>
            <person name="Davis P."/>
            <person name="Doggett J."/>
            <person name="Feltwell T."/>
            <person name="Goble A."/>
            <person name="Hamlin N."/>
            <person name="Hauser H."/>
            <person name="Holroyd S."/>
            <person name="Jagels K."/>
            <person name="Leather S."/>
            <person name="Moule S."/>
            <person name="Norberczak H."/>
            <person name="O'Neil S."/>
            <person name="Ormond D."/>
            <person name="Price C."/>
            <person name="Rabbinowitsch E."/>
            <person name="Rutter S."/>
            <person name="Sanders M."/>
            <person name="Saunders D."/>
            <person name="Seeger K."/>
            <person name="Sharp S."/>
            <person name="Simmonds M."/>
            <person name="Skelton J."/>
            <person name="Squares R."/>
            <person name="Squares S."/>
            <person name="Stevens K."/>
            <person name="Unwin L."/>
            <person name="Whitehead S."/>
            <person name="Barrell B.G."/>
            <person name="Maskell D.J."/>
        </authorList>
    </citation>
    <scope>NUCLEOTIDE SEQUENCE [LARGE SCALE GENOMIC DNA]</scope>
    <source>
        <strain>Tohama I / ATCC BAA-589 / NCTC 13251</strain>
    </source>
</reference>
<proteinExistence type="inferred from homology"/>
<evidence type="ECO:0000255" key="1">
    <source>
        <dbReference type="HAMAP-Rule" id="MF_00160"/>
    </source>
</evidence>
<accession>Q7VZG4</accession>
<organism>
    <name type="scientific">Bordetella pertussis (strain Tohama I / ATCC BAA-589 / NCTC 13251)</name>
    <dbReference type="NCBI Taxonomy" id="257313"/>
    <lineage>
        <taxon>Bacteria</taxon>
        <taxon>Pseudomonadati</taxon>
        <taxon>Pseudomonadota</taxon>
        <taxon>Betaproteobacteria</taxon>
        <taxon>Burkholderiales</taxon>
        <taxon>Alcaligenaceae</taxon>
        <taxon>Bordetella</taxon>
    </lineage>
</organism>